<comment type="function">
    <text evidence="1">Endonuclease that specifically degrades the RNA of RNA-DNA hybrids.</text>
</comment>
<comment type="catalytic activity">
    <reaction evidence="1">
        <text>Endonucleolytic cleavage to 5'-phosphomonoester.</text>
        <dbReference type="EC" id="3.1.26.4"/>
    </reaction>
</comment>
<comment type="cofactor">
    <cofactor evidence="1">
        <name>Mn(2+)</name>
        <dbReference type="ChEBI" id="CHEBI:29035"/>
    </cofactor>
    <cofactor evidence="1">
        <name>Mg(2+)</name>
        <dbReference type="ChEBI" id="CHEBI:18420"/>
    </cofactor>
    <text evidence="1">Manganese or magnesium. Binds 1 divalent metal ion per monomer in the absence of substrate. May bind a second metal ion after substrate binding.</text>
</comment>
<comment type="subcellular location">
    <subcellularLocation>
        <location evidence="1">Cytoplasm</location>
    </subcellularLocation>
</comment>
<comment type="similarity">
    <text evidence="1">Belongs to the RNase HII family.</text>
</comment>
<sequence length="189" mass="20413">MIAGVDEAGRGAWIGNVVAAAVILPNDYDLPDLTDSKKLSAAKRERLCAAIYEQAIAVACAWCSPEEIDQLNIHYATLCAMKKAVITLKVAPTEVLIDGKFAPELPFPTRTIIGGDALEPAISAASIVAKVTRDKQMIALDALYPDYGFAAHKGYGTQKHQQALRQFGVLPLHRRSYAPIAALLKNNKK</sequence>
<gene>
    <name evidence="1" type="primary">rnhB</name>
    <name type="ordered locus">DNO_0687</name>
</gene>
<accession>A5EV63</accession>
<dbReference type="EC" id="3.1.26.4" evidence="1"/>
<dbReference type="EMBL" id="CP000513">
    <property type="protein sequence ID" value="ABQ13082.1"/>
    <property type="molecule type" value="Genomic_DNA"/>
</dbReference>
<dbReference type="RefSeq" id="WP_012031020.1">
    <property type="nucleotide sequence ID" value="NC_009446.1"/>
</dbReference>
<dbReference type="SMR" id="A5EV63"/>
<dbReference type="STRING" id="246195.DNO_0687"/>
<dbReference type="KEGG" id="dno:DNO_0687"/>
<dbReference type="eggNOG" id="COG0164">
    <property type="taxonomic scope" value="Bacteria"/>
</dbReference>
<dbReference type="HOGENOM" id="CLU_036532_3_2_6"/>
<dbReference type="OrthoDB" id="9803420at2"/>
<dbReference type="Proteomes" id="UP000000248">
    <property type="component" value="Chromosome"/>
</dbReference>
<dbReference type="GO" id="GO:0005737">
    <property type="term" value="C:cytoplasm"/>
    <property type="evidence" value="ECO:0007669"/>
    <property type="project" value="UniProtKB-SubCell"/>
</dbReference>
<dbReference type="GO" id="GO:0032299">
    <property type="term" value="C:ribonuclease H2 complex"/>
    <property type="evidence" value="ECO:0007669"/>
    <property type="project" value="TreeGrafter"/>
</dbReference>
<dbReference type="GO" id="GO:0030145">
    <property type="term" value="F:manganese ion binding"/>
    <property type="evidence" value="ECO:0007669"/>
    <property type="project" value="UniProtKB-UniRule"/>
</dbReference>
<dbReference type="GO" id="GO:0003723">
    <property type="term" value="F:RNA binding"/>
    <property type="evidence" value="ECO:0007669"/>
    <property type="project" value="InterPro"/>
</dbReference>
<dbReference type="GO" id="GO:0004523">
    <property type="term" value="F:RNA-DNA hybrid ribonuclease activity"/>
    <property type="evidence" value="ECO:0007669"/>
    <property type="project" value="UniProtKB-UniRule"/>
</dbReference>
<dbReference type="GO" id="GO:0043137">
    <property type="term" value="P:DNA replication, removal of RNA primer"/>
    <property type="evidence" value="ECO:0007669"/>
    <property type="project" value="TreeGrafter"/>
</dbReference>
<dbReference type="GO" id="GO:0006298">
    <property type="term" value="P:mismatch repair"/>
    <property type="evidence" value="ECO:0007669"/>
    <property type="project" value="TreeGrafter"/>
</dbReference>
<dbReference type="CDD" id="cd07182">
    <property type="entry name" value="RNase_HII_bacteria_HII_like"/>
    <property type="match status" value="1"/>
</dbReference>
<dbReference type="Gene3D" id="3.30.420.10">
    <property type="entry name" value="Ribonuclease H-like superfamily/Ribonuclease H"/>
    <property type="match status" value="1"/>
</dbReference>
<dbReference type="HAMAP" id="MF_00052_B">
    <property type="entry name" value="RNase_HII_B"/>
    <property type="match status" value="1"/>
</dbReference>
<dbReference type="InterPro" id="IPR022898">
    <property type="entry name" value="RNase_HII"/>
</dbReference>
<dbReference type="InterPro" id="IPR001352">
    <property type="entry name" value="RNase_HII/HIII"/>
</dbReference>
<dbReference type="InterPro" id="IPR024567">
    <property type="entry name" value="RNase_HII/HIII_dom"/>
</dbReference>
<dbReference type="InterPro" id="IPR012337">
    <property type="entry name" value="RNaseH-like_sf"/>
</dbReference>
<dbReference type="InterPro" id="IPR036397">
    <property type="entry name" value="RNaseH_sf"/>
</dbReference>
<dbReference type="NCBIfam" id="NF000595">
    <property type="entry name" value="PRK00015.1-3"/>
    <property type="match status" value="1"/>
</dbReference>
<dbReference type="PANTHER" id="PTHR10954">
    <property type="entry name" value="RIBONUCLEASE H2 SUBUNIT A"/>
    <property type="match status" value="1"/>
</dbReference>
<dbReference type="PANTHER" id="PTHR10954:SF18">
    <property type="entry name" value="RIBONUCLEASE HII"/>
    <property type="match status" value="1"/>
</dbReference>
<dbReference type="Pfam" id="PF01351">
    <property type="entry name" value="RNase_HII"/>
    <property type="match status" value="1"/>
</dbReference>
<dbReference type="SUPFAM" id="SSF53098">
    <property type="entry name" value="Ribonuclease H-like"/>
    <property type="match status" value="1"/>
</dbReference>
<dbReference type="PROSITE" id="PS51975">
    <property type="entry name" value="RNASE_H_2"/>
    <property type="match status" value="1"/>
</dbReference>
<reference key="1">
    <citation type="journal article" date="2007" name="Nat. Biotechnol.">
        <title>Genome sequence and identification of candidate vaccine antigens from the animal pathogen Dichelobacter nodosus.</title>
        <authorList>
            <person name="Myers G.S.A."/>
            <person name="Parker D."/>
            <person name="Al-Hasani K."/>
            <person name="Kennan R.M."/>
            <person name="Seemann T."/>
            <person name="Ren Q."/>
            <person name="Badger J.H."/>
            <person name="Selengut J.D."/>
            <person name="Deboy R.T."/>
            <person name="Tettelin H."/>
            <person name="Boyce J.D."/>
            <person name="McCarl V.P."/>
            <person name="Han X."/>
            <person name="Nelson W.C."/>
            <person name="Madupu R."/>
            <person name="Mohamoud Y."/>
            <person name="Holley T."/>
            <person name="Fedorova N."/>
            <person name="Khouri H."/>
            <person name="Bottomley S.P."/>
            <person name="Whittington R.J."/>
            <person name="Adler B."/>
            <person name="Songer J.G."/>
            <person name="Rood J.I."/>
            <person name="Paulsen I.T."/>
        </authorList>
    </citation>
    <scope>NUCLEOTIDE SEQUENCE [LARGE SCALE GENOMIC DNA]</scope>
    <source>
        <strain>VCS1703A</strain>
    </source>
</reference>
<protein>
    <recommendedName>
        <fullName evidence="1">Ribonuclease HII</fullName>
        <shortName evidence="1">RNase HII</shortName>
        <ecNumber evidence="1">3.1.26.4</ecNumber>
    </recommendedName>
</protein>
<proteinExistence type="inferred from homology"/>
<name>RNH2_DICNV</name>
<keyword id="KW-0963">Cytoplasm</keyword>
<keyword id="KW-0255">Endonuclease</keyword>
<keyword id="KW-0378">Hydrolase</keyword>
<keyword id="KW-0464">Manganese</keyword>
<keyword id="KW-0479">Metal-binding</keyword>
<keyword id="KW-0540">Nuclease</keyword>
<keyword id="KW-1185">Reference proteome</keyword>
<feature type="chain" id="PRO_0000334893" description="Ribonuclease HII">
    <location>
        <begin position="1"/>
        <end position="189"/>
    </location>
</feature>
<feature type="domain" description="RNase H type-2" evidence="2">
    <location>
        <begin position="1"/>
        <end position="189"/>
    </location>
</feature>
<feature type="binding site" evidence="1">
    <location>
        <position position="6"/>
    </location>
    <ligand>
        <name>a divalent metal cation</name>
        <dbReference type="ChEBI" id="CHEBI:60240"/>
    </ligand>
</feature>
<feature type="binding site" evidence="1">
    <location>
        <position position="7"/>
    </location>
    <ligand>
        <name>a divalent metal cation</name>
        <dbReference type="ChEBI" id="CHEBI:60240"/>
    </ligand>
</feature>
<feature type="binding site" evidence="1">
    <location>
        <position position="98"/>
    </location>
    <ligand>
        <name>a divalent metal cation</name>
        <dbReference type="ChEBI" id="CHEBI:60240"/>
    </ligand>
</feature>
<organism>
    <name type="scientific">Dichelobacter nodosus (strain VCS1703A)</name>
    <dbReference type="NCBI Taxonomy" id="246195"/>
    <lineage>
        <taxon>Bacteria</taxon>
        <taxon>Pseudomonadati</taxon>
        <taxon>Pseudomonadota</taxon>
        <taxon>Gammaproteobacteria</taxon>
        <taxon>Cardiobacteriales</taxon>
        <taxon>Cardiobacteriaceae</taxon>
        <taxon>Dichelobacter</taxon>
    </lineage>
</organism>
<evidence type="ECO:0000255" key="1">
    <source>
        <dbReference type="HAMAP-Rule" id="MF_00052"/>
    </source>
</evidence>
<evidence type="ECO:0000255" key="2">
    <source>
        <dbReference type="PROSITE-ProRule" id="PRU01319"/>
    </source>
</evidence>